<keyword id="KW-1185">Reference proteome</keyword>
<name>Y2210_ARCFU</name>
<feature type="chain" id="PRO_0000128121" description="Uncharacterized protein AF_2210">
    <location>
        <begin position="1"/>
        <end position="78"/>
    </location>
</feature>
<dbReference type="EMBL" id="AE000782">
    <property type="protein sequence ID" value="AAB89053.1"/>
    <property type="molecule type" value="Genomic_DNA"/>
</dbReference>
<dbReference type="PIR" id="B69526">
    <property type="entry name" value="B69526"/>
</dbReference>
<dbReference type="STRING" id="224325.AF_2210"/>
<dbReference type="PaxDb" id="224325-AF_2210"/>
<dbReference type="EnsemblBacteria" id="AAB89053">
    <property type="protein sequence ID" value="AAB89053"/>
    <property type="gene ID" value="AF_2210"/>
</dbReference>
<dbReference type="KEGG" id="afu:AF_2210"/>
<dbReference type="eggNOG" id="arCOG10357">
    <property type="taxonomic scope" value="Archaea"/>
</dbReference>
<dbReference type="HOGENOM" id="CLU_2613398_0_0_2"/>
<dbReference type="Proteomes" id="UP000002199">
    <property type="component" value="Chromosome"/>
</dbReference>
<protein>
    <recommendedName>
        <fullName>Uncharacterized protein AF_2210</fullName>
    </recommendedName>
</protein>
<organism>
    <name type="scientific">Archaeoglobus fulgidus (strain ATCC 49558 / DSM 4304 / JCM 9628 / NBRC 100126 / VC-16)</name>
    <dbReference type="NCBI Taxonomy" id="224325"/>
    <lineage>
        <taxon>Archaea</taxon>
        <taxon>Methanobacteriati</taxon>
        <taxon>Methanobacteriota</taxon>
        <taxon>Archaeoglobi</taxon>
        <taxon>Archaeoglobales</taxon>
        <taxon>Archaeoglobaceae</taxon>
        <taxon>Archaeoglobus</taxon>
    </lineage>
</organism>
<proteinExistence type="predicted"/>
<reference key="1">
    <citation type="journal article" date="1997" name="Nature">
        <title>The complete genome sequence of the hyperthermophilic, sulphate-reducing archaeon Archaeoglobus fulgidus.</title>
        <authorList>
            <person name="Klenk H.-P."/>
            <person name="Clayton R.A."/>
            <person name="Tomb J.-F."/>
            <person name="White O."/>
            <person name="Nelson K.E."/>
            <person name="Ketchum K.A."/>
            <person name="Dodson R.J."/>
            <person name="Gwinn M.L."/>
            <person name="Hickey E.K."/>
            <person name="Peterson J.D."/>
            <person name="Richardson D.L."/>
            <person name="Kerlavage A.R."/>
            <person name="Graham D.E."/>
            <person name="Kyrpides N.C."/>
            <person name="Fleischmann R.D."/>
            <person name="Quackenbush J."/>
            <person name="Lee N.H."/>
            <person name="Sutton G.G."/>
            <person name="Gill S.R."/>
            <person name="Kirkness E.F."/>
            <person name="Dougherty B.A."/>
            <person name="McKenney K."/>
            <person name="Adams M.D."/>
            <person name="Loftus B.J."/>
            <person name="Peterson S.N."/>
            <person name="Reich C.I."/>
            <person name="McNeil L.K."/>
            <person name="Badger J.H."/>
            <person name="Glodek A."/>
            <person name="Zhou L."/>
            <person name="Overbeek R."/>
            <person name="Gocayne J.D."/>
            <person name="Weidman J.F."/>
            <person name="McDonald L.A."/>
            <person name="Utterback T.R."/>
            <person name="Cotton M.D."/>
            <person name="Spriggs T."/>
            <person name="Artiach P."/>
            <person name="Kaine B.P."/>
            <person name="Sykes S.M."/>
            <person name="Sadow P.W."/>
            <person name="D'Andrea K.P."/>
            <person name="Bowman C."/>
            <person name="Fujii C."/>
            <person name="Garland S.A."/>
            <person name="Mason T.M."/>
            <person name="Olsen G.J."/>
            <person name="Fraser C.M."/>
            <person name="Smith H.O."/>
            <person name="Woese C.R."/>
            <person name="Venter J.C."/>
        </authorList>
    </citation>
    <scope>NUCLEOTIDE SEQUENCE [LARGE SCALE GENOMIC DNA]</scope>
    <source>
        <strain>ATCC 49558 / DSM 4304 / JCM 9628 / NBRC 100126 / VC-16</strain>
    </source>
</reference>
<gene>
    <name type="ordered locus">AF_2210</name>
</gene>
<sequence length="78" mass="8730">MVTVESTILQVKNRRHTAVIYVNESKIEVVDCTNSTNCRIQGVKGAGCPSYCPFVVDAKRYVQGLKTKYRVEVLNPNP</sequence>
<accession>O28073</accession>